<feature type="chain" id="PRO_0000084732" description="26S proteasome regulatory subunit 10B">
    <location>
        <begin position="1"/>
        <end position="389"/>
    </location>
</feature>
<feature type="binding site" evidence="2">
    <location>
        <begin position="174"/>
        <end position="181"/>
    </location>
    <ligand>
        <name>ATP</name>
        <dbReference type="ChEBI" id="CHEBI:30616"/>
    </ligand>
</feature>
<feature type="modified residue" description="N6-acetyllysine" evidence="8">
    <location>
        <position position="72"/>
    </location>
</feature>
<feature type="modified residue" description="N6-acetyllysine" evidence="8">
    <location>
        <position position="206"/>
    </location>
</feature>
<feature type="modified residue" description="Phosphoserine" evidence="9">
    <location>
        <position position="244"/>
    </location>
</feature>
<feature type="sequence conflict" description="In Ref. 1; BAA11338." evidence="7" ref="1">
    <original>I</original>
    <variation>T</variation>
    <location>
        <position position="276"/>
    </location>
</feature>
<feature type="helix" evidence="10">
    <location>
        <begin position="34"/>
        <end position="51"/>
    </location>
</feature>
<feature type="strand" evidence="10">
    <location>
        <begin position="55"/>
        <end position="60"/>
    </location>
</feature>
<feature type="strand" evidence="10">
    <location>
        <begin position="64"/>
        <end position="67"/>
    </location>
</feature>
<feature type="strand" evidence="10">
    <location>
        <begin position="69"/>
        <end position="73"/>
    </location>
</feature>
<feature type="strand" evidence="10">
    <location>
        <begin position="78"/>
        <end position="81"/>
    </location>
</feature>
<feature type="strand" evidence="10">
    <location>
        <begin position="85"/>
        <end position="87"/>
    </location>
</feature>
<feature type="turn" evidence="10">
    <location>
        <begin position="89"/>
        <end position="91"/>
    </location>
</feature>
<feature type="strand" evidence="10">
    <location>
        <begin position="97"/>
        <end position="100"/>
    </location>
</feature>
<feature type="turn" evidence="10">
    <location>
        <begin position="102"/>
        <end position="104"/>
    </location>
</feature>
<feature type="strand" evidence="10">
    <location>
        <begin position="107"/>
        <end position="110"/>
    </location>
</feature>
<feature type="helix" evidence="10">
    <location>
        <begin position="122"/>
        <end position="124"/>
    </location>
</feature>
<feature type="helix" evidence="10">
    <location>
        <begin position="132"/>
        <end position="134"/>
    </location>
</feature>
<feature type="helix" evidence="10">
    <location>
        <begin position="139"/>
        <end position="154"/>
    </location>
</feature>
<feature type="helix" evidence="10">
    <location>
        <begin position="156"/>
        <end position="162"/>
    </location>
</feature>
<feature type="strand" evidence="10">
    <location>
        <begin position="170"/>
        <end position="173"/>
    </location>
</feature>
<feature type="helix" evidence="10">
    <location>
        <begin position="180"/>
        <end position="191"/>
    </location>
</feature>
<feature type="strand" evidence="10">
    <location>
        <begin position="194"/>
        <end position="198"/>
    </location>
</feature>
<feature type="helix" evidence="10">
    <location>
        <begin position="200"/>
        <end position="203"/>
    </location>
</feature>
<feature type="helix" evidence="10">
    <location>
        <begin position="210"/>
        <end position="224"/>
    </location>
</feature>
<feature type="strand" evidence="10">
    <location>
        <begin position="227"/>
        <end position="233"/>
    </location>
</feature>
<feature type="turn" evidence="10">
    <location>
        <begin position="236"/>
        <end position="238"/>
    </location>
</feature>
<feature type="helix" evidence="10">
    <location>
        <begin position="248"/>
        <end position="264"/>
    </location>
</feature>
<feature type="strand" evidence="10">
    <location>
        <begin position="278"/>
        <end position="280"/>
    </location>
</feature>
<feature type="turn" evidence="10">
    <location>
        <begin position="282"/>
        <end position="284"/>
    </location>
</feature>
<feature type="turn" evidence="10">
    <location>
        <begin position="287"/>
        <end position="289"/>
    </location>
</feature>
<feature type="strand" evidence="10">
    <location>
        <begin position="290"/>
        <end position="300"/>
    </location>
</feature>
<feature type="helix" evidence="10">
    <location>
        <begin position="308"/>
        <end position="317"/>
    </location>
</feature>
<feature type="helix" evidence="10">
    <location>
        <begin position="328"/>
        <end position="334"/>
    </location>
</feature>
<feature type="turn" evidence="10">
    <location>
        <begin position="335"/>
        <end position="337"/>
    </location>
</feature>
<feature type="helix" evidence="10">
    <location>
        <begin position="341"/>
        <end position="357"/>
    </location>
</feature>
<feature type="helix" evidence="10">
    <location>
        <begin position="365"/>
        <end position="373"/>
    </location>
</feature>
<dbReference type="EMBL" id="D78275">
    <property type="protein sequence ID" value="BAA11338.1"/>
    <property type="molecule type" value="mRNA"/>
</dbReference>
<dbReference type="EMBL" id="AF006305">
    <property type="protein sequence ID" value="AAB61616.1"/>
    <property type="molecule type" value="mRNA"/>
</dbReference>
<dbReference type="EMBL" id="BT006843">
    <property type="protein sequence ID" value="AAP35489.1"/>
    <property type="molecule type" value="mRNA"/>
</dbReference>
<dbReference type="EMBL" id="CR456709">
    <property type="protein sequence ID" value="CAG32990.1"/>
    <property type="molecule type" value="mRNA"/>
</dbReference>
<dbReference type="EMBL" id="AK313670">
    <property type="protein sequence ID" value="BAG36422.1"/>
    <property type="molecule type" value="mRNA"/>
</dbReference>
<dbReference type="EMBL" id="CH471078">
    <property type="protein sequence ID" value="EAW65645.1"/>
    <property type="molecule type" value="Genomic_DNA"/>
</dbReference>
<dbReference type="EMBL" id="BC005390">
    <property type="protein sequence ID" value="AAH05390.1"/>
    <property type="molecule type" value="mRNA"/>
</dbReference>
<dbReference type="CCDS" id="CCDS9710.3"/>
<dbReference type="PIR" id="S71316">
    <property type="entry name" value="S71316"/>
</dbReference>
<dbReference type="RefSeq" id="NP_002797.3">
    <property type="nucleotide sequence ID" value="NM_002806.3"/>
</dbReference>
<dbReference type="PDB" id="5GJQ">
    <property type="method" value="EM"/>
    <property type="resolution" value="4.50 A"/>
    <property type="chains" value="L=1-389"/>
</dbReference>
<dbReference type="PDB" id="5GJR">
    <property type="method" value="EM"/>
    <property type="resolution" value="3.50 A"/>
    <property type="chains" value="L/z=1-389"/>
</dbReference>
<dbReference type="PDB" id="5L4G">
    <property type="method" value="EM"/>
    <property type="resolution" value="4.02 A"/>
    <property type="chains" value="L=1-389"/>
</dbReference>
<dbReference type="PDB" id="5LN3">
    <property type="method" value="EM"/>
    <property type="resolution" value="6.80 A"/>
    <property type="chains" value="L=1-389"/>
</dbReference>
<dbReference type="PDB" id="5M32">
    <property type="method" value="EM"/>
    <property type="resolution" value="3.80 A"/>
    <property type="chains" value="f=1-379"/>
</dbReference>
<dbReference type="PDB" id="5T0C">
    <property type="method" value="EM"/>
    <property type="resolution" value="3.80 A"/>
    <property type="chains" value="AE/BE=1-389"/>
</dbReference>
<dbReference type="PDB" id="5T0G">
    <property type="method" value="EM"/>
    <property type="resolution" value="4.40 A"/>
    <property type="chains" value="E=1-389"/>
</dbReference>
<dbReference type="PDB" id="5T0H">
    <property type="method" value="EM"/>
    <property type="resolution" value="6.80 A"/>
    <property type="chains" value="E=1-389"/>
</dbReference>
<dbReference type="PDB" id="5T0I">
    <property type="method" value="EM"/>
    <property type="resolution" value="8.00 A"/>
    <property type="chains" value="E=1-389"/>
</dbReference>
<dbReference type="PDB" id="5T0J">
    <property type="method" value="EM"/>
    <property type="resolution" value="8.00 A"/>
    <property type="chains" value="E=1-389"/>
</dbReference>
<dbReference type="PDB" id="5VFP">
    <property type="method" value="EM"/>
    <property type="resolution" value="4.20 A"/>
    <property type="chains" value="E=15-389"/>
</dbReference>
<dbReference type="PDB" id="5VFQ">
    <property type="method" value="EM"/>
    <property type="resolution" value="4.20 A"/>
    <property type="chains" value="E=15-389"/>
</dbReference>
<dbReference type="PDB" id="5VFR">
    <property type="method" value="EM"/>
    <property type="resolution" value="4.90 A"/>
    <property type="chains" value="E=15-389"/>
</dbReference>
<dbReference type="PDB" id="5VFS">
    <property type="method" value="EM"/>
    <property type="resolution" value="3.60 A"/>
    <property type="chains" value="E=1-389"/>
</dbReference>
<dbReference type="PDB" id="5VFT">
    <property type="method" value="EM"/>
    <property type="resolution" value="7.00 A"/>
    <property type="chains" value="E=37-389"/>
</dbReference>
<dbReference type="PDB" id="5VFU">
    <property type="method" value="EM"/>
    <property type="resolution" value="5.80 A"/>
    <property type="chains" value="E=37-389"/>
</dbReference>
<dbReference type="PDB" id="5VGZ">
    <property type="method" value="EM"/>
    <property type="resolution" value="3.70 A"/>
    <property type="chains" value="E=11-114"/>
</dbReference>
<dbReference type="PDB" id="5VHF">
    <property type="method" value="EM"/>
    <property type="resolution" value="5.70 A"/>
    <property type="chains" value="E=11-389"/>
</dbReference>
<dbReference type="PDB" id="5VHH">
    <property type="method" value="EM"/>
    <property type="resolution" value="6.10 A"/>
    <property type="chains" value="E=11-389"/>
</dbReference>
<dbReference type="PDB" id="5VHI">
    <property type="method" value="EM"/>
    <property type="resolution" value="6.80 A"/>
    <property type="chains" value="E=11-389"/>
</dbReference>
<dbReference type="PDB" id="5VHJ">
    <property type="method" value="EM"/>
    <property type="resolution" value="8.50 A"/>
    <property type="chains" value="E=128-389"/>
</dbReference>
<dbReference type="PDB" id="5VHM">
    <property type="method" value="EM"/>
    <property type="resolution" value="8.30 A"/>
    <property type="chains" value="E=128-389"/>
</dbReference>
<dbReference type="PDB" id="5VHN">
    <property type="method" value="EM"/>
    <property type="resolution" value="7.30 A"/>
    <property type="chains" value="E=115-389"/>
</dbReference>
<dbReference type="PDB" id="5VHO">
    <property type="method" value="EM"/>
    <property type="resolution" value="8.30 A"/>
    <property type="chains" value="E=128-389"/>
</dbReference>
<dbReference type="PDB" id="5VHP">
    <property type="method" value="EM"/>
    <property type="resolution" value="7.90 A"/>
    <property type="chains" value="E=128-389"/>
</dbReference>
<dbReference type="PDB" id="5VHQ">
    <property type="method" value="EM"/>
    <property type="resolution" value="8.90 A"/>
    <property type="chains" value="E=128-389"/>
</dbReference>
<dbReference type="PDB" id="5VHR">
    <property type="method" value="EM"/>
    <property type="resolution" value="7.70 A"/>
    <property type="chains" value="E=128-389"/>
</dbReference>
<dbReference type="PDB" id="5VHS">
    <property type="method" value="EM"/>
    <property type="resolution" value="8.80 A"/>
    <property type="chains" value="E=11-389"/>
</dbReference>
<dbReference type="PDB" id="6MSB">
    <property type="method" value="EM"/>
    <property type="resolution" value="3.00 A"/>
    <property type="chains" value="E=1-389"/>
</dbReference>
<dbReference type="PDB" id="6MSD">
    <property type="method" value="EM"/>
    <property type="resolution" value="3.20 A"/>
    <property type="chains" value="E=1-389"/>
</dbReference>
<dbReference type="PDB" id="6MSE">
    <property type="method" value="EM"/>
    <property type="resolution" value="3.30 A"/>
    <property type="chains" value="E=1-389"/>
</dbReference>
<dbReference type="PDB" id="6MSG">
    <property type="method" value="EM"/>
    <property type="resolution" value="3.50 A"/>
    <property type="chains" value="E=1-389"/>
</dbReference>
<dbReference type="PDB" id="6MSH">
    <property type="method" value="EM"/>
    <property type="resolution" value="3.60 A"/>
    <property type="chains" value="E=1-389"/>
</dbReference>
<dbReference type="PDB" id="6MSJ">
    <property type="method" value="EM"/>
    <property type="resolution" value="3.30 A"/>
    <property type="chains" value="E=1-389"/>
</dbReference>
<dbReference type="PDB" id="6MSK">
    <property type="method" value="EM"/>
    <property type="resolution" value="3.20 A"/>
    <property type="chains" value="E=1-389"/>
</dbReference>
<dbReference type="PDB" id="6WJN">
    <property type="method" value="EM"/>
    <property type="resolution" value="5.70 A"/>
    <property type="chains" value="E=15-389"/>
</dbReference>
<dbReference type="PDB" id="7QXN">
    <property type="method" value="EM"/>
    <property type="resolution" value="3.70 A"/>
    <property type="chains" value="E=1-389"/>
</dbReference>
<dbReference type="PDB" id="7QXP">
    <property type="method" value="EM"/>
    <property type="resolution" value="3.60 A"/>
    <property type="chains" value="E=1-389"/>
</dbReference>
<dbReference type="PDB" id="7QXU">
    <property type="method" value="EM"/>
    <property type="resolution" value="4.30 A"/>
    <property type="chains" value="E=1-389"/>
</dbReference>
<dbReference type="PDB" id="7QXW">
    <property type="method" value="EM"/>
    <property type="resolution" value="4.10 A"/>
    <property type="chains" value="E=1-389"/>
</dbReference>
<dbReference type="PDB" id="7QXX">
    <property type="method" value="EM"/>
    <property type="resolution" value="4.40 A"/>
    <property type="chains" value="E=1-389"/>
</dbReference>
<dbReference type="PDB" id="7QY7">
    <property type="method" value="EM"/>
    <property type="resolution" value="4.70 A"/>
    <property type="chains" value="E=1-389"/>
</dbReference>
<dbReference type="PDB" id="7QYA">
    <property type="method" value="EM"/>
    <property type="resolution" value="4.80 A"/>
    <property type="chains" value="E=1-389"/>
</dbReference>
<dbReference type="PDB" id="7QYB">
    <property type="method" value="EM"/>
    <property type="resolution" value="4.10 A"/>
    <property type="chains" value="E=1-389"/>
</dbReference>
<dbReference type="PDB" id="8CVT">
    <property type="method" value="EM"/>
    <property type="resolution" value="3.00 A"/>
    <property type="chains" value="E=1-389"/>
</dbReference>
<dbReference type="PDB" id="8JRI">
    <property type="method" value="EM"/>
    <property type="resolution" value="3.40 A"/>
    <property type="chains" value="E=1-389"/>
</dbReference>
<dbReference type="PDB" id="8JRT">
    <property type="method" value="EM"/>
    <property type="resolution" value="3.60 A"/>
    <property type="chains" value="E=1-389"/>
</dbReference>
<dbReference type="PDB" id="8JTI">
    <property type="method" value="EM"/>
    <property type="resolution" value="3.80 A"/>
    <property type="chains" value="E=1-389"/>
</dbReference>
<dbReference type="PDB" id="8K0G">
    <property type="method" value="EM"/>
    <property type="resolution" value="3.80 A"/>
    <property type="chains" value="E=1-389"/>
</dbReference>
<dbReference type="PDB" id="8USB">
    <property type="method" value="EM"/>
    <property type="resolution" value="2.73 A"/>
    <property type="chains" value="E=1-389"/>
</dbReference>
<dbReference type="PDB" id="8USC">
    <property type="method" value="EM"/>
    <property type="resolution" value="3.10 A"/>
    <property type="chains" value="E=1-389"/>
</dbReference>
<dbReference type="PDB" id="9E8G">
    <property type="method" value="EM"/>
    <property type="resolution" value="3.01 A"/>
    <property type="chains" value="E=1-389"/>
</dbReference>
<dbReference type="PDB" id="9E8H">
    <property type="method" value="EM"/>
    <property type="resolution" value="2.90 A"/>
    <property type="chains" value="E=1-389"/>
</dbReference>
<dbReference type="PDB" id="9E8I">
    <property type="method" value="EM"/>
    <property type="resolution" value="2.87 A"/>
    <property type="chains" value="E=1-389"/>
</dbReference>
<dbReference type="PDB" id="9E8J">
    <property type="method" value="EM"/>
    <property type="resolution" value="3.47 A"/>
    <property type="chains" value="E=1-389"/>
</dbReference>
<dbReference type="PDB" id="9E8K">
    <property type="method" value="EM"/>
    <property type="resolution" value="4.08 A"/>
    <property type="chains" value="E=1-389"/>
</dbReference>
<dbReference type="PDB" id="9E8L">
    <property type="method" value="EM"/>
    <property type="resolution" value="3.59 A"/>
    <property type="chains" value="E=1-389"/>
</dbReference>
<dbReference type="PDB" id="9E8N">
    <property type="method" value="EM"/>
    <property type="resolution" value="3.62 A"/>
    <property type="chains" value="E=1-389"/>
</dbReference>
<dbReference type="PDB" id="9E8O">
    <property type="method" value="EM"/>
    <property type="resolution" value="3.10 A"/>
    <property type="chains" value="E=1-389"/>
</dbReference>
<dbReference type="PDB" id="9E8Q">
    <property type="method" value="EM"/>
    <property type="resolution" value="3.16 A"/>
    <property type="chains" value="E=1-389"/>
</dbReference>
<dbReference type="PDBsum" id="5GJQ"/>
<dbReference type="PDBsum" id="5GJR"/>
<dbReference type="PDBsum" id="5L4G"/>
<dbReference type="PDBsum" id="5LN3"/>
<dbReference type="PDBsum" id="5M32"/>
<dbReference type="PDBsum" id="5T0C"/>
<dbReference type="PDBsum" id="5T0G"/>
<dbReference type="PDBsum" id="5T0H"/>
<dbReference type="PDBsum" id="5T0I"/>
<dbReference type="PDBsum" id="5T0J"/>
<dbReference type="PDBsum" id="5VFP"/>
<dbReference type="PDBsum" id="5VFQ"/>
<dbReference type="PDBsum" id="5VFR"/>
<dbReference type="PDBsum" id="5VFS"/>
<dbReference type="PDBsum" id="5VFT"/>
<dbReference type="PDBsum" id="5VFU"/>
<dbReference type="PDBsum" id="5VGZ"/>
<dbReference type="PDBsum" id="5VHF"/>
<dbReference type="PDBsum" id="5VHH"/>
<dbReference type="PDBsum" id="5VHI"/>
<dbReference type="PDBsum" id="5VHJ"/>
<dbReference type="PDBsum" id="5VHM"/>
<dbReference type="PDBsum" id="5VHN"/>
<dbReference type="PDBsum" id="5VHO"/>
<dbReference type="PDBsum" id="5VHP"/>
<dbReference type="PDBsum" id="5VHQ"/>
<dbReference type="PDBsum" id="5VHR"/>
<dbReference type="PDBsum" id="5VHS"/>
<dbReference type="PDBsum" id="6MSB"/>
<dbReference type="PDBsum" id="6MSD"/>
<dbReference type="PDBsum" id="6MSE"/>
<dbReference type="PDBsum" id="6MSG"/>
<dbReference type="PDBsum" id="6MSH"/>
<dbReference type="PDBsum" id="6MSJ"/>
<dbReference type="PDBsum" id="6MSK"/>
<dbReference type="PDBsum" id="6WJN"/>
<dbReference type="PDBsum" id="7QXN"/>
<dbReference type="PDBsum" id="7QXP"/>
<dbReference type="PDBsum" id="7QXU"/>
<dbReference type="PDBsum" id="7QXW"/>
<dbReference type="PDBsum" id="7QXX"/>
<dbReference type="PDBsum" id="7QY7"/>
<dbReference type="PDBsum" id="7QYA"/>
<dbReference type="PDBsum" id="7QYB"/>
<dbReference type="PDBsum" id="8CVT"/>
<dbReference type="PDBsum" id="8JRI"/>
<dbReference type="PDBsum" id="8JRT"/>
<dbReference type="PDBsum" id="8JTI"/>
<dbReference type="PDBsum" id="8K0G"/>
<dbReference type="PDBsum" id="8USB"/>
<dbReference type="PDBsum" id="8USC"/>
<dbReference type="PDBsum" id="9E8G"/>
<dbReference type="PDBsum" id="9E8H"/>
<dbReference type="PDBsum" id="9E8I"/>
<dbReference type="PDBsum" id="9E8J"/>
<dbReference type="PDBsum" id="9E8K"/>
<dbReference type="PDBsum" id="9E8L"/>
<dbReference type="PDBsum" id="9E8N"/>
<dbReference type="PDBsum" id="9E8O"/>
<dbReference type="PDBsum" id="9E8Q"/>
<dbReference type="EMDB" id="EMD-21696"/>
<dbReference type="EMDB" id="EMD-27018"/>
<dbReference type="EMDB" id="EMD-36598"/>
<dbReference type="EMDB" id="EMD-36605"/>
<dbReference type="EMDB" id="EMD-36645"/>
<dbReference type="EMDB" id="EMD-36764"/>
<dbReference type="EMDB" id="EMD-4089"/>
<dbReference type="EMDB" id="EMD-4146"/>
<dbReference type="EMDB" id="EMD-42506"/>
<dbReference type="EMDB" id="EMD-42507"/>
<dbReference type="EMDB" id="EMD-47719"/>
<dbReference type="EMDB" id="EMD-47720"/>
<dbReference type="EMDB" id="EMD-47721"/>
<dbReference type="EMDB" id="EMD-47722"/>
<dbReference type="EMDB" id="EMD-47723"/>
<dbReference type="EMDB" id="EMD-47724"/>
<dbReference type="EMDB" id="EMD-47725"/>
<dbReference type="EMDB" id="EMD-47726"/>
<dbReference type="EMDB" id="EMD-47727"/>
<dbReference type="EMDB" id="EMD-60138"/>
<dbReference type="EMDB" id="EMD-60139"/>
<dbReference type="EMDB" id="EMD-8663"/>
<dbReference type="EMDB" id="EMD-8664"/>
<dbReference type="EMDB" id="EMD-8665"/>
<dbReference type="EMDB" id="EMD-8666"/>
<dbReference type="EMDB" id="EMD-8667"/>
<dbReference type="EMDB" id="EMD-8668"/>
<dbReference type="EMDB" id="EMD-8672"/>
<dbReference type="EMDB" id="EMD-8674"/>
<dbReference type="EMDB" id="EMD-8675"/>
<dbReference type="EMDB" id="EMD-8676"/>
<dbReference type="EMDB" id="EMD-8677"/>
<dbReference type="EMDB" id="EMD-8678"/>
<dbReference type="EMDB" id="EMD-8679"/>
<dbReference type="EMDB" id="EMD-8680"/>
<dbReference type="EMDB" id="EMD-8681"/>
<dbReference type="EMDB" id="EMD-8682"/>
<dbReference type="EMDB" id="EMD-8683"/>
<dbReference type="EMDB" id="EMD-8684"/>
<dbReference type="EMDB" id="EMD-9511"/>
<dbReference type="EMDB" id="EMD-9512"/>
<dbReference type="SMR" id="P62333"/>
<dbReference type="BioGRID" id="111679">
    <property type="interactions" value="358"/>
</dbReference>
<dbReference type="ComplexPortal" id="CPX-5993">
    <property type="entry name" value="26S proteasome complex"/>
</dbReference>
<dbReference type="ComplexPortal" id="CPX-8964">
    <property type="entry name" value="19S proteasome regulatory complex"/>
</dbReference>
<dbReference type="ComplexPortal" id="CPX-9082">
    <property type="entry name" value="19S-20S-PA28-alphabeta hybrid proteasome complex"/>
</dbReference>
<dbReference type="ComplexPortal" id="CPX-9085">
    <property type="entry name" value="19S-20S-PA28-gamma hybrid proteasome complex"/>
</dbReference>
<dbReference type="ComplexPortal" id="CPX-9086">
    <property type="entry name" value="30S proteasome complex"/>
</dbReference>
<dbReference type="CORUM" id="P62333"/>
<dbReference type="DIP" id="DIP-38150N"/>
<dbReference type="FunCoup" id="P62333">
    <property type="interactions" value="2934"/>
</dbReference>
<dbReference type="IntAct" id="P62333">
    <property type="interactions" value="149"/>
</dbReference>
<dbReference type="MINT" id="P62333"/>
<dbReference type="STRING" id="9606.ENSP00000484998"/>
<dbReference type="ChEMBL" id="CHEMBL2364701"/>
<dbReference type="GlyGen" id="P62333">
    <property type="glycosylation" value="1 site, 1 O-linked glycan (1 site)"/>
</dbReference>
<dbReference type="iPTMnet" id="P62333"/>
<dbReference type="MetOSite" id="P62333"/>
<dbReference type="PhosphoSitePlus" id="P62333"/>
<dbReference type="SwissPalm" id="P62333"/>
<dbReference type="BioMuta" id="PSMC6"/>
<dbReference type="DMDM" id="51702772"/>
<dbReference type="REPRODUCTION-2DPAGE" id="IPI00021926"/>
<dbReference type="jPOST" id="P62333"/>
<dbReference type="MassIVE" id="P62333"/>
<dbReference type="PaxDb" id="9606-ENSP00000401802"/>
<dbReference type="PeptideAtlas" id="P62333"/>
<dbReference type="ProteomicsDB" id="57397"/>
<dbReference type="Pumba" id="P62333"/>
<dbReference type="Antibodypedia" id="23885">
    <property type="antibodies" value="305 antibodies from 34 providers"/>
</dbReference>
<dbReference type="DNASU" id="5706"/>
<dbReference type="Ensembl" id="ENST00000445930.7">
    <property type="protein sequence ID" value="ENSP00000401802.3"/>
    <property type="gene ID" value="ENSG00000100519.12"/>
</dbReference>
<dbReference type="GeneID" id="5706"/>
<dbReference type="KEGG" id="hsa:5706"/>
<dbReference type="MANE-Select" id="ENST00000445930.7">
    <property type="protein sequence ID" value="ENSP00000401802.3"/>
    <property type="RefSeq nucleotide sequence ID" value="NM_002806.5"/>
    <property type="RefSeq protein sequence ID" value="NP_002797.4"/>
</dbReference>
<dbReference type="UCSC" id="uc059bor.1">
    <property type="organism name" value="human"/>
</dbReference>
<dbReference type="AGR" id="HGNC:9553"/>
<dbReference type="CTD" id="5706"/>
<dbReference type="DisGeNET" id="5706"/>
<dbReference type="GeneCards" id="PSMC6"/>
<dbReference type="HGNC" id="HGNC:9553">
    <property type="gene designation" value="PSMC6"/>
</dbReference>
<dbReference type="HPA" id="ENSG00000100519">
    <property type="expression patterns" value="Low tissue specificity"/>
</dbReference>
<dbReference type="MIM" id="602708">
    <property type="type" value="gene"/>
</dbReference>
<dbReference type="neXtProt" id="NX_P62333"/>
<dbReference type="OpenTargets" id="ENSG00000100519"/>
<dbReference type="PharmGKB" id="PA33898"/>
<dbReference type="VEuPathDB" id="HostDB:ENSG00000100519"/>
<dbReference type="eggNOG" id="KOG0651">
    <property type="taxonomic scope" value="Eukaryota"/>
</dbReference>
<dbReference type="GeneTree" id="ENSGT01020000230346"/>
<dbReference type="HOGENOM" id="CLU_000688_2_2_1"/>
<dbReference type="InParanoid" id="P62333"/>
<dbReference type="OMA" id="DHEPCVI"/>
<dbReference type="OrthoDB" id="1937997at2759"/>
<dbReference type="PAN-GO" id="P62333">
    <property type="GO annotations" value="5 GO annotations based on evolutionary models"/>
</dbReference>
<dbReference type="PhylomeDB" id="P62333"/>
<dbReference type="TreeFam" id="TF106229"/>
<dbReference type="PathwayCommons" id="P62333"/>
<dbReference type="Reactome" id="R-HSA-1169091">
    <property type="pathway name" value="Activation of NF-kappaB in B cells"/>
</dbReference>
<dbReference type="Reactome" id="R-HSA-1234176">
    <property type="pathway name" value="Oxygen-dependent proline hydroxylation of Hypoxia-inducible Factor Alpha"/>
</dbReference>
<dbReference type="Reactome" id="R-HSA-1236974">
    <property type="pathway name" value="ER-Phagosome pathway"/>
</dbReference>
<dbReference type="Reactome" id="R-HSA-1236978">
    <property type="pathway name" value="Cross-presentation of soluble exogenous antigens (endosomes)"/>
</dbReference>
<dbReference type="Reactome" id="R-HSA-174084">
    <property type="pathway name" value="Autodegradation of Cdh1 by Cdh1:APC/C"/>
</dbReference>
<dbReference type="Reactome" id="R-HSA-174113">
    <property type="pathway name" value="SCF-beta-TrCP mediated degradation of Emi1"/>
</dbReference>
<dbReference type="Reactome" id="R-HSA-174154">
    <property type="pathway name" value="APC/C:Cdc20 mediated degradation of Securin"/>
</dbReference>
<dbReference type="Reactome" id="R-HSA-174178">
    <property type="pathway name" value="APC/C:Cdh1 mediated degradation of Cdc20 and other APC/C:Cdh1 targeted proteins in late mitosis/early G1"/>
</dbReference>
<dbReference type="Reactome" id="R-HSA-174184">
    <property type="pathway name" value="Cdc20:Phospho-APC/C mediated degradation of Cyclin A"/>
</dbReference>
<dbReference type="Reactome" id="R-HSA-180534">
    <property type="pathway name" value="Vpu mediated degradation of CD4"/>
</dbReference>
<dbReference type="Reactome" id="R-HSA-180585">
    <property type="pathway name" value="Vif-mediated degradation of APOBEC3G"/>
</dbReference>
<dbReference type="Reactome" id="R-HSA-187577">
    <property type="pathway name" value="SCF(Skp2)-mediated degradation of p27/p21"/>
</dbReference>
<dbReference type="Reactome" id="R-HSA-195253">
    <property type="pathway name" value="Degradation of beta-catenin by the destruction complex"/>
</dbReference>
<dbReference type="Reactome" id="R-HSA-202424">
    <property type="pathway name" value="Downstream TCR signaling"/>
</dbReference>
<dbReference type="Reactome" id="R-HSA-211733">
    <property type="pathway name" value="Regulation of activated PAK-2p34 by proteasome mediated degradation"/>
</dbReference>
<dbReference type="Reactome" id="R-HSA-2467813">
    <property type="pathway name" value="Separation of Sister Chromatids"/>
</dbReference>
<dbReference type="Reactome" id="R-HSA-2871837">
    <property type="pathway name" value="FCERI mediated NF-kB activation"/>
</dbReference>
<dbReference type="Reactome" id="R-HSA-349425">
    <property type="pathway name" value="Autodegradation of the E3 ubiquitin ligase COP1"/>
</dbReference>
<dbReference type="Reactome" id="R-HSA-350562">
    <property type="pathway name" value="Regulation of ornithine decarboxylase (ODC)"/>
</dbReference>
<dbReference type="Reactome" id="R-HSA-382556">
    <property type="pathway name" value="ABC-family proteins mediated transport"/>
</dbReference>
<dbReference type="Reactome" id="R-HSA-450408">
    <property type="pathway name" value="AUF1 (hnRNP D0) binds and destabilizes mRNA"/>
</dbReference>
<dbReference type="Reactome" id="R-HSA-4608870">
    <property type="pathway name" value="Asymmetric localization of PCP proteins"/>
</dbReference>
<dbReference type="Reactome" id="R-HSA-4641257">
    <property type="pathway name" value="Degradation of AXIN"/>
</dbReference>
<dbReference type="Reactome" id="R-HSA-4641258">
    <property type="pathway name" value="Degradation of DVL"/>
</dbReference>
<dbReference type="Reactome" id="R-HSA-5358346">
    <property type="pathway name" value="Hedgehog ligand biogenesis"/>
</dbReference>
<dbReference type="Reactome" id="R-HSA-5362768">
    <property type="pathway name" value="Hh mutants are degraded by ERAD"/>
</dbReference>
<dbReference type="Reactome" id="R-HSA-5607761">
    <property type="pathway name" value="Dectin-1 mediated noncanonical NF-kB signaling"/>
</dbReference>
<dbReference type="Reactome" id="R-HSA-5607764">
    <property type="pathway name" value="CLEC7A (Dectin-1) signaling"/>
</dbReference>
<dbReference type="Reactome" id="R-HSA-5610780">
    <property type="pathway name" value="Degradation of GLI1 by the proteasome"/>
</dbReference>
<dbReference type="Reactome" id="R-HSA-5610783">
    <property type="pathway name" value="Degradation of GLI2 by the proteasome"/>
</dbReference>
<dbReference type="Reactome" id="R-HSA-5610785">
    <property type="pathway name" value="GLI3 is processed to GLI3R by the proteasome"/>
</dbReference>
<dbReference type="Reactome" id="R-HSA-5632684">
    <property type="pathway name" value="Hedgehog 'on' state"/>
</dbReference>
<dbReference type="Reactome" id="R-HSA-5658442">
    <property type="pathway name" value="Regulation of RAS by GAPs"/>
</dbReference>
<dbReference type="Reactome" id="R-HSA-5668541">
    <property type="pathway name" value="TNFR2 non-canonical NF-kB pathway"/>
</dbReference>
<dbReference type="Reactome" id="R-HSA-5676590">
    <property type="pathway name" value="NIK--&gt;noncanonical NF-kB signaling"/>
</dbReference>
<dbReference type="Reactome" id="R-HSA-5678895">
    <property type="pathway name" value="Defective CFTR causes cystic fibrosis"/>
</dbReference>
<dbReference type="Reactome" id="R-HSA-5687128">
    <property type="pathway name" value="MAPK6/MAPK4 signaling"/>
</dbReference>
<dbReference type="Reactome" id="R-HSA-5689603">
    <property type="pathway name" value="UCH proteinases"/>
</dbReference>
<dbReference type="Reactome" id="R-HSA-5689880">
    <property type="pathway name" value="Ub-specific processing proteases"/>
</dbReference>
<dbReference type="Reactome" id="R-HSA-68867">
    <property type="pathway name" value="Assembly of the pre-replicative complex"/>
</dbReference>
<dbReference type="Reactome" id="R-HSA-68949">
    <property type="pathway name" value="Orc1 removal from chromatin"/>
</dbReference>
<dbReference type="Reactome" id="R-HSA-69017">
    <property type="pathway name" value="CDK-mediated phosphorylation and removal of Cdc6"/>
</dbReference>
<dbReference type="Reactome" id="R-HSA-69481">
    <property type="pathway name" value="G2/M Checkpoints"/>
</dbReference>
<dbReference type="Reactome" id="R-HSA-69601">
    <property type="pathway name" value="Ubiquitin Mediated Degradation of Phosphorylated Cdc25A"/>
</dbReference>
<dbReference type="Reactome" id="R-HSA-75815">
    <property type="pathway name" value="Ubiquitin-dependent degradation of Cyclin D"/>
</dbReference>
<dbReference type="Reactome" id="R-HSA-8852276">
    <property type="pathway name" value="The role of GTSE1 in G2/M progression after G2 checkpoint"/>
</dbReference>
<dbReference type="Reactome" id="R-HSA-8854050">
    <property type="pathway name" value="FBXL7 down-regulates AURKA during mitotic entry and in early mitosis"/>
</dbReference>
<dbReference type="Reactome" id="R-HSA-8939236">
    <property type="pathway name" value="RUNX1 regulates transcription of genes involved in differentiation of HSCs"/>
</dbReference>
<dbReference type="Reactome" id="R-HSA-8939902">
    <property type="pathway name" value="Regulation of RUNX2 expression and activity"/>
</dbReference>
<dbReference type="Reactome" id="R-HSA-8941858">
    <property type="pathway name" value="Regulation of RUNX3 expression and activity"/>
</dbReference>
<dbReference type="Reactome" id="R-HSA-8948751">
    <property type="pathway name" value="Regulation of PTEN stability and activity"/>
</dbReference>
<dbReference type="Reactome" id="R-HSA-8951664">
    <property type="pathway name" value="Neddylation"/>
</dbReference>
<dbReference type="Reactome" id="R-HSA-9010553">
    <property type="pathway name" value="Regulation of expression of SLITs and ROBOs"/>
</dbReference>
<dbReference type="Reactome" id="R-HSA-9020702">
    <property type="pathway name" value="Interleukin-1 signaling"/>
</dbReference>
<dbReference type="Reactome" id="R-HSA-9604323">
    <property type="pathway name" value="Negative regulation of NOTCH4 signaling"/>
</dbReference>
<dbReference type="Reactome" id="R-HSA-9735871">
    <property type="pathway name" value="SARS-CoV-1 targets host intracellular signalling and regulatory pathways"/>
</dbReference>
<dbReference type="Reactome" id="R-HSA-9755511">
    <property type="pathway name" value="KEAP1-NFE2L2 pathway"/>
</dbReference>
<dbReference type="Reactome" id="R-HSA-9762114">
    <property type="pathway name" value="GSK3B and BTRC:CUL1-mediated-degradation of NFE2L2"/>
</dbReference>
<dbReference type="Reactome" id="R-HSA-9824272">
    <property type="pathway name" value="Somitogenesis"/>
</dbReference>
<dbReference type="Reactome" id="R-HSA-983168">
    <property type="pathway name" value="Antigen processing: Ubiquitination &amp; Proteasome degradation"/>
</dbReference>
<dbReference type="Reactome" id="R-HSA-9907900">
    <property type="pathway name" value="Proteasome assembly"/>
</dbReference>
<dbReference type="SignaLink" id="P62333"/>
<dbReference type="SIGNOR" id="P62333"/>
<dbReference type="BioGRID-ORCS" id="5706">
    <property type="hits" value="834 hits in 1130 CRISPR screens"/>
</dbReference>
<dbReference type="ChiTaRS" id="PSMC6">
    <property type="organism name" value="human"/>
</dbReference>
<dbReference type="GeneWiki" id="PSMC6"/>
<dbReference type="GenomeRNAi" id="5706"/>
<dbReference type="Pharos" id="P62333">
    <property type="development level" value="Tbio"/>
</dbReference>
<dbReference type="PRO" id="PR:P62333"/>
<dbReference type="Proteomes" id="UP000005640">
    <property type="component" value="Chromosome 14"/>
</dbReference>
<dbReference type="RNAct" id="P62333">
    <property type="molecule type" value="protein"/>
</dbReference>
<dbReference type="Bgee" id="ENSG00000100519">
    <property type="expression patterns" value="Expressed in esophagus squamous epithelium and 205 other cell types or tissues"/>
</dbReference>
<dbReference type="ExpressionAtlas" id="P62333">
    <property type="expression patterns" value="baseline and differential"/>
</dbReference>
<dbReference type="GO" id="GO:0005829">
    <property type="term" value="C:cytosol"/>
    <property type="evidence" value="ECO:0000304"/>
    <property type="project" value="Reactome"/>
</dbReference>
<dbReference type="GO" id="GO:0031597">
    <property type="term" value="C:cytosolic proteasome complex"/>
    <property type="evidence" value="ECO:0007669"/>
    <property type="project" value="Ensembl"/>
</dbReference>
<dbReference type="GO" id="GO:0070062">
    <property type="term" value="C:extracellular exosome"/>
    <property type="evidence" value="ECO:0007005"/>
    <property type="project" value="UniProtKB"/>
</dbReference>
<dbReference type="GO" id="GO:0016234">
    <property type="term" value="C:inclusion body"/>
    <property type="evidence" value="ECO:0007669"/>
    <property type="project" value="Ensembl"/>
</dbReference>
<dbReference type="GO" id="GO:0016020">
    <property type="term" value="C:membrane"/>
    <property type="evidence" value="ECO:0007005"/>
    <property type="project" value="UniProtKB"/>
</dbReference>
<dbReference type="GO" id="GO:0005654">
    <property type="term" value="C:nucleoplasm"/>
    <property type="evidence" value="ECO:0000304"/>
    <property type="project" value="Reactome"/>
</dbReference>
<dbReference type="GO" id="GO:0005634">
    <property type="term" value="C:nucleus"/>
    <property type="evidence" value="ECO:0000314"/>
    <property type="project" value="UniProtKB"/>
</dbReference>
<dbReference type="GO" id="GO:0022624">
    <property type="term" value="C:proteasome accessory complex"/>
    <property type="evidence" value="ECO:0000250"/>
    <property type="project" value="UniProtKB"/>
</dbReference>
<dbReference type="GO" id="GO:0000502">
    <property type="term" value="C:proteasome complex"/>
    <property type="evidence" value="ECO:0000314"/>
    <property type="project" value="UniProtKB"/>
</dbReference>
<dbReference type="GO" id="GO:0008540">
    <property type="term" value="C:proteasome regulatory particle, base subcomplex"/>
    <property type="evidence" value="ECO:0000318"/>
    <property type="project" value="GO_Central"/>
</dbReference>
<dbReference type="GO" id="GO:0005524">
    <property type="term" value="F:ATP binding"/>
    <property type="evidence" value="ECO:0007669"/>
    <property type="project" value="UniProtKB-KW"/>
</dbReference>
<dbReference type="GO" id="GO:0016887">
    <property type="term" value="F:ATP hydrolysis activity"/>
    <property type="evidence" value="ECO:0007669"/>
    <property type="project" value="InterPro"/>
</dbReference>
<dbReference type="GO" id="GO:0042802">
    <property type="term" value="F:identical protein binding"/>
    <property type="evidence" value="ECO:0000353"/>
    <property type="project" value="IntAct"/>
</dbReference>
<dbReference type="GO" id="GO:0036402">
    <property type="term" value="F:proteasome-activating activity"/>
    <property type="evidence" value="ECO:0000318"/>
    <property type="project" value="GO_Central"/>
</dbReference>
<dbReference type="GO" id="GO:0030674">
    <property type="term" value="F:protein-macromolecule adaptor activity"/>
    <property type="evidence" value="ECO:0000303"/>
    <property type="project" value="UniProtKB"/>
</dbReference>
<dbReference type="GO" id="GO:0036503">
    <property type="term" value="P:ERAD pathway"/>
    <property type="evidence" value="ECO:0000318"/>
    <property type="project" value="GO_Central"/>
</dbReference>
<dbReference type="GO" id="GO:0090261">
    <property type="term" value="P:positive regulation of inclusion body assembly"/>
    <property type="evidence" value="ECO:0007669"/>
    <property type="project" value="Ensembl"/>
</dbReference>
<dbReference type="GO" id="GO:1901800">
    <property type="term" value="P:positive regulation of proteasomal protein catabolic process"/>
    <property type="evidence" value="ECO:0000305"/>
    <property type="project" value="UniProtKB"/>
</dbReference>
<dbReference type="GO" id="GO:0045899">
    <property type="term" value="P:positive regulation of RNA polymerase II transcription preinitiation complex assembly"/>
    <property type="evidence" value="ECO:0000318"/>
    <property type="project" value="GO_Central"/>
</dbReference>
<dbReference type="GO" id="GO:0043161">
    <property type="term" value="P:proteasome-mediated ubiquitin-dependent protein catabolic process"/>
    <property type="evidence" value="ECO:0000318"/>
    <property type="project" value="GO_Central"/>
</dbReference>
<dbReference type="CDD" id="cd19502">
    <property type="entry name" value="RecA-like_PAN_like"/>
    <property type="match status" value="1"/>
</dbReference>
<dbReference type="FunFam" id="1.10.8.60:FF:000008">
    <property type="entry name" value="26S protease regulatory subunit 10B"/>
    <property type="match status" value="1"/>
</dbReference>
<dbReference type="FunFam" id="2.40.50.140:FF:000027">
    <property type="entry name" value="26S protease regulatory subunit 10B"/>
    <property type="match status" value="1"/>
</dbReference>
<dbReference type="FunFam" id="3.40.50.300:FF:000034">
    <property type="entry name" value="26S protease regulatory subunit 10B"/>
    <property type="match status" value="1"/>
</dbReference>
<dbReference type="Gene3D" id="1.10.8.60">
    <property type="match status" value="1"/>
</dbReference>
<dbReference type="Gene3D" id="2.40.50.140">
    <property type="entry name" value="Nucleic acid-binding proteins"/>
    <property type="match status" value="1"/>
</dbReference>
<dbReference type="Gene3D" id="3.40.50.300">
    <property type="entry name" value="P-loop containing nucleotide triphosphate hydrolases"/>
    <property type="match status" value="1"/>
</dbReference>
<dbReference type="InterPro" id="IPR050221">
    <property type="entry name" value="26S_Proteasome_ATPase"/>
</dbReference>
<dbReference type="InterPro" id="IPR003593">
    <property type="entry name" value="AAA+_ATPase"/>
</dbReference>
<dbReference type="InterPro" id="IPR041569">
    <property type="entry name" value="AAA_lid_3"/>
</dbReference>
<dbReference type="InterPro" id="IPR003959">
    <property type="entry name" value="ATPase_AAA_core"/>
</dbReference>
<dbReference type="InterPro" id="IPR003960">
    <property type="entry name" value="ATPase_AAA_CS"/>
</dbReference>
<dbReference type="InterPro" id="IPR012340">
    <property type="entry name" value="NA-bd_OB-fold"/>
</dbReference>
<dbReference type="InterPro" id="IPR027417">
    <property type="entry name" value="P-loop_NTPase"/>
</dbReference>
<dbReference type="InterPro" id="IPR032501">
    <property type="entry name" value="Prot_ATP_ID_OB_2nd"/>
</dbReference>
<dbReference type="PANTHER" id="PTHR23073">
    <property type="entry name" value="26S PROTEASOME REGULATORY SUBUNIT"/>
    <property type="match status" value="1"/>
</dbReference>
<dbReference type="Pfam" id="PF00004">
    <property type="entry name" value="AAA"/>
    <property type="match status" value="1"/>
</dbReference>
<dbReference type="Pfam" id="PF17862">
    <property type="entry name" value="AAA_lid_3"/>
    <property type="match status" value="1"/>
</dbReference>
<dbReference type="Pfam" id="PF16450">
    <property type="entry name" value="Prot_ATP_ID_OB_C"/>
    <property type="match status" value="1"/>
</dbReference>
<dbReference type="SMART" id="SM00382">
    <property type="entry name" value="AAA"/>
    <property type="match status" value="1"/>
</dbReference>
<dbReference type="SUPFAM" id="SSF52540">
    <property type="entry name" value="P-loop containing nucleoside triphosphate hydrolases"/>
    <property type="match status" value="1"/>
</dbReference>
<dbReference type="PROSITE" id="PS00674">
    <property type="entry name" value="AAA"/>
    <property type="match status" value="1"/>
</dbReference>
<organism>
    <name type="scientific">Homo sapiens</name>
    <name type="common">Human</name>
    <dbReference type="NCBI Taxonomy" id="9606"/>
    <lineage>
        <taxon>Eukaryota</taxon>
        <taxon>Metazoa</taxon>
        <taxon>Chordata</taxon>
        <taxon>Craniata</taxon>
        <taxon>Vertebrata</taxon>
        <taxon>Euteleostomi</taxon>
        <taxon>Mammalia</taxon>
        <taxon>Eutheria</taxon>
        <taxon>Euarchontoglires</taxon>
        <taxon>Primates</taxon>
        <taxon>Haplorrhini</taxon>
        <taxon>Catarrhini</taxon>
        <taxon>Hominidae</taxon>
        <taxon>Homo</taxon>
    </lineage>
</organism>
<sequence>MADPRDKALQDYRKKLLEHKEIDGRLKELREQLKELTKQYEKSENDLKALQSVGQIVGEVLKQLTEEKFIVKATNGPRYVVGCRRQLDKSKLKPGTRVALDMTTLTIMRYLPREVDPLVYNMSHEDPGNVSYSEIGGLSEQIRELREVIELPLTNPELFQRVGIIPPKGCLLYGPPGTGKTLLARAVASQLDCNFLKVVSSSIVDKYIGESARLIREMFNYARDHQPCIIFMDEIDAIGGRRFSEGTSADREIQRTLMELLNQMDGFDTLHRVKMIMATNRPDTLDPALLRPGRLDRKIHIDLPNEQARLDILKIHAGPITKHGEIDYEAIVKLSDGFNGADLRNVCTEAGMFAIRADHDFVVQEDFMKAVRKVADSKKLESKLDYKPV</sequence>
<name>PRS10_HUMAN</name>
<accession>P62333</accession>
<accession>B2R975</accession>
<accession>P49719</accession>
<accession>Q6IBU3</accession>
<accession>Q92524</accession>
<evidence type="ECO:0000250" key="1"/>
<evidence type="ECO:0000255" key="2"/>
<evidence type="ECO:0000269" key="3">
    <source>
    </source>
</evidence>
<evidence type="ECO:0000269" key="4">
    <source>
    </source>
</evidence>
<evidence type="ECO:0000269" key="5">
    <source>
    </source>
</evidence>
<evidence type="ECO:0000269" key="6">
    <source>
    </source>
</evidence>
<evidence type="ECO:0000305" key="7"/>
<evidence type="ECO:0007744" key="8">
    <source>
    </source>
</evidence>
<evidence type="ECO:0007744" key="9">
    <source>
    </source>
</evidence>
<evidence type="ECO:0007829" key="10">
    <source>
        <dbReference type="PDB" id="9E8J"/>
    </source>
</evidence>
<protein>
    <recommendedName>
        <fullName>26S proteasome regulatory subunit 10B</fullName>
    </recommendedName>
    <alternativeName>
        <fullName>26S proteasome AAA-ATPase subunit RPT4</fullName>
    </alternativeName>
    <alternativeName>
        <fullName>Proteasome 26S subunit ATPase 6</fullName>
    </alternativeName>
    <alternativeName>
        <fullName>Proteasome subunit p42</fullName>
    </alternativeName>
</protein>
<gene>
    <name type="primary">PSMC6</name>
    <name type="synonym">SUG2</name>
</gene>
<keyword id="KW-0002">3D-structure</keyword>
<keyword id="KW-0007">Acetylation</keyword>
<keyword id="KW-0067">ATP-binding</keyword>
<keyword id="KW-0963">Cytoplasm</keyword>
<keyword id="KW-0903">Direct protein sequencing</keyword>
<keyword id="KW-0547">Nucleotide-binding</keyword>
<keyword id="KW-0539">Nucleus</keyword>
<keyword id="KW-0597">Phosphoprotein</keyword>
<keyword id="KW-0647">Proteasome</keyword>
<keyword id="KW-1267">Proteomics identification</keyword>
<keyword id="KW-1185">Reference proteome</keyword>
<comment type="function">
    <text evidence="3">Component of the 26S proteasome, a multiprotein complex involved in the ATP-dependent degradation of ubiquitinated proteins. This complex plays a key role in the maintenance of protein homeostasis by removing misfolded or damaged proteins, which could impair cellular functions, and by removing proteins whose functions are no longer required. Therefore, the proteasome participates in numerous cellular processes, including cell cycle progression, apoptosis, or DNA damage repair. PSMC6 belongs to the heterohexameric ring of AAA (ATPases associated with diverse cellular activities) proteins that unfolds ubiquitinated target proteins that are concurrently translocated into a proteolytic chamber and degraded into peptides.</text>
</comment>
<comment type="subunit">
    <text evidence="4 5 6">Component of the 19S proteasome regulatory particle complex. The 26S proteasome consists of a 20S core particle (CP) and two 19S regulatory subunits (RP). The regulatory particle is made of a lid composed of 9 subunits, a base containing 6 ATPases including PSMC6 and few additional components (PubMed:27342858, PubMed:27428775). Interacts with PAAF1 (PubMed:15831487).</text>
</comment>
<comment type="interaction">
    <interactant intactId="EBI-357669">
        <id>P62333</id>
    </interactant>
    <interactant intactId="EBI-358049">
        <id>Q13895</id>
        <label>BYSL</label>
    </interactant>
    <organismsDiffer>false</organismsDiffer>
    <experiments>3</experiments>
</comment>
<comment type="interaction">
    <interactant intactId="EBI-357669">
        <id>P62333</id>
    </interactant>
    <interactant intactId="EBI-747505">
        <id>Q8TAB5</id>
        <label>C1orf216</label>
    </interactant>
    <organismsDiffer>false</organismsDiffer>
    <experiments>4</experiments>
</comment>
<comment type="interaction">
    <interactant intactId="EBI-357669">
        <id>P62333</id>
    </interactant>
    <interactant intactId="EBI-10247802">
        <id>Q8IYE0-2</id>
        <label>CCDC146</label>
    </interactant>
    <organismsDiffer>false</organismsDiffer>
    <experiments>3</experiments>
</comment>
<comment type="interaction">
    <interactant intactId="EBI-357669">
        <id>P62333</id>
    </interactant>
    <interactant intactId="EBI-295634">
        <id>Q16543</id>
        <label>CDC37</label>
    </interactant>
    <organismsDiffer>false</organismsDiffer>
    <experiments>3</experiments>
</comment>
<comment type="interaction">
    <interactant intactId="EBI-357669">
        <id>P62333</id>
    </interactant>
    <interactant intactId="EBI-886">
        <id>P46108</id>
        <label>CRK</label>
    </interactant>
    <organismsDiffer>false</organismsDiffer>
    <experiments>10</experiments>
</comment>
<comment type="interaction">
    <interactant intactId="EBI-357669">
        <id>P62333</id>
    </interactant>
    <interactant intactId="EBI-910">
        <id>P46109</id>
        <label>CRKL</label>
    </interactant>
    <organismsDiffer>false</organismsDiffer>
    <experiments>5</experiments>
</comment>
<comment type="interaction">
    <interactant intactId="EBI-357669">
        <id>P62333</id>
    </interactant>
    <interactant intactId="EBI-744761">
        <id>Q6BCY4</id>
        <label>CYB5R2</label>
    </interactant>
    <organismsDiffer>false</organismsDiffer>
    <experiments>3</experiments>
</comment>
<comment type="interaction">
    <interactant intactId="EBI-357669">
        <id>P62333</id>
    </interactant>
    <interactant intactId="EBI-348399">
        <id>P22607</id>
        <label>FGFR3</label>
    </interactant>
    <organismsDiffer>false</organismsDiffer>
    <experiments>3</experiments>
</comment>
<comment type="interaction">
    <interactant intactId="EBI-357669">
        <id>P62333</id>
    </interactant>
    <interactant intactId="EBI-8285963">
        <id>Q14957</id>
        <label>GRIN2C</label>
    </interactant>
    <organismsDiffer>false</organismsDiffer>
    <experiments>3</experiments>
</comment>
<comment type="interaction">
    <interactant intactId="EBI-357669">
        <id>P62333</id>
    </interactant>
    <interactant intactId="EBI-389518">
        <id>P52655</id>
        <label>GTF2A1</label>
    </interactant>
    <organismsDiffer>false</organismsDiffer>
    <experiments>3</experiments>
</comment>
<comment type="interaction">
    <interactant intactId="EBI-357669">
        <id>P62333</id>
    </interactant>
    <interactant intactId="EBI-352682">
        <id>P04792</id>
        <label>HSPB1</label>
    </interactant>
    <organismsDiffer>false</organismsDiffer>
    <experiments>3</experiments>
</comment>
<comment type="interaction">
    <interactant intactId="EBI-357669">
        <id>P62333</id>
    </interactant>
    <interactant intactId="EBI-357598">
        <id>P62191</id>
        <label>PSMC1</label>
    </interactant>
    <organismsDiffer>false</organismsDiffer>
    <experiments>8</experiments>
</comment>
<comment type="interaction">
    <interactant intactId="EBI-357669">
        <id>P62333</id>
    </interactant>
    <interactant intactId="EBI-359720">
        <id>P17980</id>
        <label>PSMC3</label>
    </interactant>
    <organismsDiffer>false</organismsDiffer>
    <experiments>20</experiments>
</comment>
<comment type="interaction">
    <interactant intactId="EBI-357669">
        <id>P62333</id>
    </interactant>
    <interactant intactId="EBI-743997">
        <id>P43686</id>
        <label>PSMC4</label>
    </interactant>
    <organismsDiffer>false</organismsDiffer>
    <experiments>9</experiments>
</comment>
<comment type="interaction">
    <interactant intactId="EBI-357669">
        <id>P62333</id>
    </interactant>
    <interactant intactId="EBI-357745">
        <id>P62195</id>
        <label>PSMC5</label>
    </interactant>
    <organismsDiffer>false</organismsDiffer>
    <experiments>17</experiments>
</comment>
<comment type="interaction">
    <interactant intactId="EBI-357669">
        <id>P62333</id>
    </interactant>
    <interactant intactId="EBI-357669">
        <id>P62333</id>
        <label>PSMC6</label>
    </interactant>
    <organismsDiffer>false</organismsDiffer>
    <experiments>4</experiments>
</comment>
<comment type="interaction">
    <interactant intactId="EBI-357669">
        <id>P62333</id>
    </interactant>
    <interactant intactId="EBI-359318">
        <id>P55036</id>
        <label>PSMD4</label>
    </interactant>
    <organismsDiffer>false</organismsDiffer>
    <experiments>5</experiments>
</comment>
<comment type="interaction">
    <interactant intactId="EBI-357669">
        <id>P62333</id>
    </interactant>
    <interactant intactId="EBI-750973">
        <id>O00233</id>
        <label>PSMD9</label>
    </interactant>
    <organismsDiffer>false</organismsDiffer>
    <experiments>20</experiments>
</comment>
<comment type="interaction">
    <interactant intactId="EBI-357669">
        <id>P62333</id>
    </interactant>
    <interactant intactId="EBI-1236916">
        <id>Q14997</id>
        <label>PSME4</label>
    </interactant>
    <organismsDiffer>false</organismsDiffer>
    <experiments>2</experiments>
</comment>
<comment type="interaction">
    <interactant intactId="EBI-357669">
        <id>P62333</id>
    </interactant>
    <interactant intactId="EBI-727004">
        <id>O00560</id>
        <label>SDCBP</label>
    </interactant>
    <organismsDiffer>false</organismsDiffer>
    <experiments>6</experiments>
</comment>
<comment type="interaction">
    <interactant intactId="EBI-357669">
        <id>P62333</id>
    </interactant>
    <interactant intactId="EBI-12224055">
        <id>O43304</id>
        <label>SEC14L5</label>
    </interactant>
    <organismsDiffer>false</organismsDiffer>
    <experiments>3</experiments>
</comment>
<comment type="interaction">
    <interactant intactId="EBI-357669">
        <id>P62333</id>
    </interactant>
    <interactant intactId="EBI-455078">
        <id>Q969G3</id>
        <label>SMARCE1</label>
    </interactant>
    <organismsDiffer>false</organismsDiffer>
    <experiments>3</experiments>
</comment>
<comment type="interaction">
    <interactant intactId="EBI-357669">
        <id>P62333</id>
    </interactant>
    <interactant intactId="EBI-10180829">
        <id>Q7KZS0</id>
        <label>UBE2I</label>
    </interactant>
    <organismsDiffer>false</organismsDiffer>
    <experiments>3</experiments>
</comment>
<comment type="interaction">
    <interactant intactId="EBI-357669">
        <id>P62333</id>
    </interactant>
    <interactant intactId="EBI-720609">
        <id>O76024</id>
        <label>WFS1</label>
    </interactant>
    <organismsDiffer>false</organismsDiffer>
    <experiments>3</experiments>
</comment>
<comment type="interaction">
    <interactant intactId="EBI-357669">
        <id>P62333</id>
    </interactant>
    <interactant intactId="EBI-7602718">
        <id>P59595</id>
        <label>N</label>
    </interactant>
    <organismsDiffer>true</organismsDiffer>
    <experiments>3</experiments>
</comment>
<comment type="subcellular location">
    <subcellularLocation>
        <location evidence="1">Cytoplasm</location>
    </subcellularLocation>
    <subcellularLocation>
        <location evidence="1">Nucleus</location>
    </subcellularLocation>
</comment>
<comment type="similarity">
    <text evidence="7">Belongs to the AAA ATPase family.</text>
</comment>
<comment type="caution">
    <text evidence="7">Alternative initiation from an upstream conserved methionine cannot be fully excluded but is not experimentally supported while initiation from the displayed methionine is supported by PubMed:17323924.</text>
</comment>
<proteinExistence type="evidence at protein level"/>
<reference key="1">
    <citation type="journal article" date="1996" name="FEBS Lett.">
        <title>cDNA cloning of p42, a shared subunit of two proteasome regulatory proteins, reveals a novel member of the AAA protein family.</title>
        <authorList>
            <person name="Fujiwara T."/>
            <person name="Watanabe T.K."/>
            <person name="Tanaka K."/>
            <person name="Slaughter C.A."/>
            <person name="Demartino G.N."/>
        </authorList>
    </citation>
    <scope>NUCLEOTIDE SEQUENCE [MRNA]</scope>
    <source>
        <tissue>Aorta</tissue>
    </source>
</reference>
<reference key="2">
    <citation type="submission" date="1997-05" db="EMBL/GenBank/DDBJ databases">
        <title>Human SUG2.</title>
        <authorList>
            <person name="Li Y."/>
            <person name="Benezra R."/>
        </authorList>
    </citation>
    <scope>NUCLEOTIDE SEQUENCE [MRNA]</scope>
</reference>
<reference key="3">
    <citation type="submission" date="2003-05" db="EMBL/GenBank/DDBJ databases">
        <title>Cloning of human full-length CDSs in BD Creator(TM) system donor vector.</title>
        <authorList>
            <person name="Kalnine N."/>
            <person name="Chen X."/>
            <person name="Rolfs A."/>
            <person name="Halleck A."/>
            <person name="Hines L."/>
            <person name="Eisenstein S."/>
            <person name="Koundinya M."/>
            <person name="Raphael J."/>
            <person name="Moreira D."/>
            <person name="Kelley T."/>
            <person name="LaBaer J."/>
            <person name="Lin Y."/>
            <person name="Phelan M."/>
            <person name="Farmer A."/>
        </authorList>
    </citation>
    <scope>NUCLEOTIDE SEQUENCE [LARGE SCALE MRNA]</scope>
</reference>
<reference key="4">
    <citation type="submission" date="2004-06" db="EMBL/GenBank/DDBJ databases">
        <title>Cloning of human full open reading frames in Gateway(TM) system entry vector (pDONR201).</title>
        <authorList>
            <person name="Ebert L."/>
            <person name="Schick M."/>
            <person name="Neubert P."/>
            <person name="Schatten R."/>
            <person name="Henze S."/>
            <person name="Korn B."/>
        </authorList>
    </citation>
    <scope>NUCLEOTIDE SEQUENCE [LARGE SCALE MRNA]</scope>
</reference>
<reference key="5">
    <citation type="journal article" date="2004" name="Nat. Genet.">
        <title>Complete sequencing and characterization of 21,243 full-length human cDNAs.</title>
        <authorList>
            <person name="Ota T."/>
            <person name="Suzuki Y."/>
            <person name="Nishikawa T."/>
            <person name="Otsuki T."/>
            <person name="Sugiyama T."/>
            <person name="Irie R."/>
            <person name="Wakamatsu A."/>
            <person name="Hayashi K."/>
            <person name="Sato H."/>
            <person name="Nagai K."/>
            <person name="Kimura K."/>
            <person name="Makita H."/>
            <person name="Sekine M."/>
            <person name="Obayashi M."/>
            <person name="Nishi T."/>
            <person name="Shibahara T."/>
            <person name="Tanaka T."/>
            <person name="Ishii S."/>
            <person name="Yamamoto J."/>
            <person name="Saito K."/>
            <person name="Kawai Y."/>
            <person name="Isono Y."/>
            <person name="Nakamura Y."/>
            <person name="Nagahari K."/>
            <person name="Murakami K."/>
            <person name="Yasuda T."/>
            <person name="Iwayanagi T."/>
            <person name="Wagatsuma M."/>
            <person name="Shiratori A."/>
            <person name="Sudo H."/>
            <person name="Hosoiri T."/>
            <person name="Kaku Y."/>
            <person name="Kodaira H."/>
            <person name="Kondo H."/>
            <person name="Sugawara M."/>
            <person name="Takahashi M."/>
            <person name="Kanda K."/>
            <person name="Yokoi T."/>
            <person name="Furuya T."/>
            <person name="Kikkawa E."/>
            <person name="Omura Y."/>
            <person name="Abe K."/>
            <person name="Kamihara K."/>
            <person name="Katsuta N."/>
            <person name="Sato K."/>
            <person name="Tanikawa M."/>
            <person name="Yamazaki M."/>
            <person name="Ninomiya K."/>
            <person name="Ishibashi T."/>
            <person name="Yamashita H."/>
            <person name="Murakawa K."/>
            <person name="Fujimori K."/>
            <person name="Tanai H."/>
            <person name="Kimata M."/>
            <person name="Watanabe M."/>
            <person name="Hiraoka S."/>
            <person name="Chiba Y."/>
            <person name="Ishida S."/>
            <person name="Ono Y."/>
            <person name="Takiguchi S."/>
            <person name="Watanabe S."/>
            <person name="Yosida M."/>
            <person name="Hotuta T."/>
            <person name="Kusano J."/>
            <person name="Kanehori K."/>
            <person name="Takahashi-Fujii A."/>
            <person name="Hara H."/>
            <person name="Tanase T.-O."/>
            <person name="Nomura Y."/>
            <person name="Togiya S."/>
            <person name="Komai F."/>
            <person name="Hara R."/>
            <person name="Takeuchi K."/>
            <person name="Arita M."/>
            <person name="Imose N."/>
            <person name="Musashino K."/>
            <person name="Yuuki H."/>
            <person name="Oshima A."/>
            <person name="Sasaki N."/>
            <person name="Aotsuka S."/>
            <person name="Yoshikawa Y."/>
            <person name="Matsunawa H."/>
            <person name="Ichihara T."/>
            <person name="Shiohata N."/>
            <person name="Sano S."/>
            <person name="Moriya S."/>
            <person name="Momiyama H."/>
            <person name="Satoh N."/>
            <person name="Takami S."/>
            <person name="Terashima Y."/>
            <person name="Suzuki O."/>
            <person name="Nakagawa S."/>
            <person name="Senoh A."/>
            <person name="Mizoguchi H."/>
            <person name="Goto Y."/>
            <person name="Shimizu F."/>
            <person name="Wakebe H."/>
            <person name="Hishigaki H."/>
            <person name="Watanabe T."/>
            <person name="Sugiyama A."/>
            <person name="Takemoto M."/>
            <person name="Kawakami B."/>
            <person name="Yamazaki M."/>
            <person name="Watanabe K."/>
            <person name="Kumagai A."/>
            <person name="Itakura S."/>
            <person name="Fukuzumi Y."/>
            <person name="Fujimori Y."/>
            <person name="Komiyama M."/>
            <person name="Tashiro H."/>
            <person name="Tanigami A."/>
            <person name="Fujiwara T."/>
            <person name="Ono T."/>
            <person name="Yamada K."/>
            <person name="Fujii Y."/>
            <person name="Ozaki K."/>
            <person name="Hirao M."/>
            <person name="Ohmori Y."/>
            <person name="Kawabata A."/>
            <person name="Hikiji T."/>
            <person name="Kobatake N."/>
            <person name="Inagaki H."/>
            <person name="Ikema Y."/>
            <person name="Okamoto S."/>
            <person name="Okitani R."/>
            <person name="Kawakami T."/>
            <person name="Noguchi S."/>
            <person name="Itoh T."/>
            <person name="Shigeta K."/>
            <person name="Senba T."/>
            <person name="Matsumura K."/>
            <person name="Nakajima Y."/>
            <person name="Mizuno T."/>
            <person name="Morinaga M."/>
            <person name="Sasaki M."/>
            <person name="Togashi T."/>
            <person name="Oyama M."/>
            <person name="Hata H."/>
            <person name="Watanabe M."/>
            <person name="Komatsu T."/>
            <person name="Mizushima-Sugano J."/>
            <person name="Satoh T."/>
            <person name="Shirai Y."/>
            <person name="Takahashi Y."/>
            <person name="Nakagawa K."/>
            <person name="Okumura K."/>
            <person name="Nagase T."/>
            <person name="Nomura N."/>
            <person name="Kikuchi H."/>
            <person name="Masuho Y."/>
            <person name="Yamashita R."/>
            <person name="Nakai K."/>
            <person name="Yada T."/>
            <person name="Nakamura Y."/>
            <person name="Ohara O."/>
            <person name="Isogai T."/>
            <person name="Sugano S."/>
        </authorList>
    </citation>
    <scope>NUCLEOTIDE SEQUENCE [LARGE SCALE MRNA]</scope>
    <source>
        <tissue>Caudate nucleus</tissue>
    </source>
</reference>
<reference key="6">
    <citation type="submission" date="2005-09" db="EMBL/GenBank/DDBJ databases">
        <authorList>
            <person name="Mural R.J."/>
            <person name="Istrail S."/>
            <person name="Sutton G.G."/>
            <person name="Florea L."/>
            <person name="Halpern A.L."/>
            <person name="Mobarry C.M."/>
            <person name="Lippert R."/>
            <person name="Walenz B."/>
            <person name="Shatkay H."/>
            <person name="Dew I."/>
            <person name="Miller J.R."/>
            <person name="Flanigan M.J."/>
            <person name="Edwards N.J."/>
            <person name="Bolanos R."/>
            <person name="Fasulo D."/>
            <person name="Halldorsson B.V."/>
            <person name="Hannenhalli S."/>
            <person name="Turner R."/>
            <person name="Yooseph S."/>
            <person name="Lu F."/>
            <person name="Nusskern D.R."/>
            <person name="Shue B.C."/>
            <person name="Zheng X.H."/>
            <person name="Zhong F."/>
            <person name="Delcher A.L."/>
            <person name="Huson D.H."/>
            <person name="Kravitz S.A."/>
            <person name="Mouchard L."/>
            <person name="Reinert K."/>
            <person name="Remington K.A."/>
            <person name="Clark A.G."/>
            <person name="Waterman M.S."/>
            <person name="Eichler E.E."/>
            <person name="Adams M.D."/>
            <person name="Hunkapiller M.W."/>
            <person name="Myers E.W."/>
            <person name="Venter J.C."/>
        </authorList>
    </citation>
    <scope>NUCLEOTIDE SEQUENCE [LARGE SCALE GENOMIC DNA]</scope>
</reference>
<reference key="7">
    <citation type="journal article" date="2004" name="Genome Res.">
        <title>The status, quality, and expansion of the NIH full-length cDNA project: the Mammalian Gene Collection (MGC).</title>
        <authorList>
            <consortium name="The MGC Project Team"/>
        </authorList>
    </citation>
    <scope>NUCLEOTIDE SEQUENCE [LARGE SCALE MRNA]</scope>
    <source>
        <tissue>Urinary bladder</tissue>
    </source>
</reference>
<reference key="8">
    <citation type="journal article" date="1996" name="J. Biol. Chem.">
        <title>Identification, purification, and characterization of a PA700-dependent activator of the proteasome.</title>
        <authorList>
            <person name="Demartino G.N."/>
            <person name="Proske R.J."/>
            <person name="Moomaw C.R."/>
            <person name="Strong A.A."/>
            <person name="Song X."/>
            <person name="Hisamatsu H."/>
            <person name="Tanaka K."/>
            <person name="Slaughter C.A."/>
        </authorList>
    </citation>
    <scope>PARTIAL PROTEIN SEQUENCE</scope>
</reference>
<reference key="9">
    <citation type="journal article" date="1992" name="Eur. J. Biochem.">
        <title>Demonstration that a human 26S proteolytic complex consists of a proteasome and multiple associated protein components and hydrolyzes ATP and ubiquitin-ligated proteins by closely linked mechanisms.</title>
        <authorList>
            <person name="Kanayama H.O."/>
            <person name="Tamura T."/>
            <person name="Ugai S."/>
            <person name="Kagawa S."/>
            <person name="Tanahashi N."/>
            <person name="Yoshimura T."/>
            <person name="Tanaka K."/>
            <person name="Ichihara A."/>
        </authorList>
    </citation>
    <scope>FUNCTION</scope>
</reference>
<reference key="10">
    <citation type="journal article" date="2005" name="Mol. Cell. Biol.">
        <title>Proteasomal ATPase-associated factor 1 negatively regulates proteasome activity by interacting with proteasomal ATPases.</title>
        <authorList>
            <person name="Park Y."/>
            <person name="Hwang Y.-P."/>
            <person name="Lee J.-S."/>
            <person name="Seo S.-H."/>
            <person name="Yoon S.K."/>
            <person name="Yoon J.-B."/>
        </authorList>
    </citation>
    <scope>INTERACTION WITH PAAF1</scope>
</reference>
<reference key="11">
    <citation type="journal article" date="2007" name="Biochemistry">
        <title>Mass spectrometric characterization of the affinity-purified human 26S proteasome complex.</title>
        <authorList>
            <person name="Wang X."/>
            <person name="Chen C.-F."/>
            <person name="Baker P.R."/>
            <person name="Chen P.-L."/>
            <person name="Kaiser P."/>
            <person name="Huang L."/>
        </authorList>
    </citation>
    <scope>IDENTIFICATION BY MASS SPECTROMETRY [LARGE SCALE ANALYSIS]</scope>
    <source>
        <tissue>Embryonic kidney</tissue>
    </source>
</reference>
<reference key="12">
    <citation type="journal article" date="2009" name="Science">
        <title>Lysine acetylation targets protein complexes and co-regulates major cellular functions.</title>
        <authorList>
            <person name="Choudhary C."/>
            <person name="Kumar C."/>
            <person name="Gnad F."/>
            <person name="Nielsen M.L."/>
            <person name="Rehman M."/>
            <person name="Walther T.C."/>
            <person name="Olsen J.V."/>
            <person name="Mann M."/>
        </authorList>
    </citation>
    <scope>ACETYLATION [LARGE SCALE ANALYSIS] AT LYS-72 AND LYS-206</scope>
    <scope>IDENTIFICATION BY MASS SPECTROMETRY [LARGE SCALE ANALYSIS]</scope>
</reference>
<reference key="13">
    <citation type="journal article" date="2011" name="BMC Syst. Biol.">
        <title>Initial characterization of the human central proteome.</title>
        <authorList>
            <person name="Burkard T.R."/>
            <person name="Planyavsky M."/>
            <person name="Kaupe I."/>
            <person name="Breitwieser F.P."/>
            <person name="Buerckstuemmer T."/>
            <person name="Bennett K.L."/>
            <person name="Superti-Furga G."/>
            <person name="Colinge J."/>
        </authorList>
    </citation>
    <scope>IDENTIFICATION BY MASS SPECTROMETRY [LARGE SCALE ANALYSIS]</scope>
</reference>
<reference key="14">
    <citation type="journal article" date="2013" name="J. Proteome Res.">
        <title>Toward a comprehensive characterization of a human cancer cell phosphoproteome.</title>
        <authorList>
            <person name="Zhou H."/>
            <person name="Di Palma S."/>
            <person name="Preisinger C."/>
            <person name="Peng M."/>
            <person name="Polat A.N."/>
            <person name="Heck A.J."/>
            <person name="Mohammed S."/>
        </authorList>
    </citation>
    <scope>PHOSPHORYLATION [LARGE SCALE ANALYSIS] AT SER-244</scope>
    <scope>IDENTIFICATION BY MASS SPECTROMETRY [LARGE SCALE ANALYSIS]</scope>
    <source>
        <tissue>Cervix carcinoma</tissue>
        <tissue>Erythroleukemia</tissue>
    </source>
</reference>
<reference key="15">
    <citation type="journal article" date="2014" name="J. Proteomics">
        <title>An enzyme assisted RP-RPLC approach for in-depth analysis of human liver phosphoproteome.</title>
        <authorList>
            <person name="Bian Y."/>
            <person name="Song C."/>
            <person name="Cheng K."/>
            <person name="Dong M."/>
            <person name="Wang F."/>
            <person name="Huang J."/>
            <person name="Sun D."/>
            <person name="Wang L."/>
            <person name="Ye M."/>
            <person name="Zou H."/>
        </authorList>
    </citation>
    <scope>IDENTIFICATION BY MASS SPECTROMETRY [LARGE SCALE ANALYSIS]</scope>
    <source>
        <tissue>Liver</tissue>
    </source>
</reference>
<reference key="16">
    <citation type="journal article" date="2015" name="Proteomics">
        <title>N-terminome analysis of the human mitochondrial proteome.</title>
        <authorList>
            <person name="Vaca Jacome A.S."/>
            <person name="Rabilloud T."/>
            <person name="Schaeffer-Reiss C."/>
            <person name="Rompais M."/>
            <person name="Ayoub D."/>
            <person name="Lane L."/>
            <person name="Bairoch A."/>
            <person name="Van Dorsselaer A."/>
            <person name="Carapito C."/>
        </authorList>
    </citation>
    <scope>IDENTIFICATION BY MASS SPECTROMETRY [LARGE SCALE ANALYSIS]</scope>
</reference>
<reference key="17">
    <citation type="journal article" date="2016" name="Nat. Struct. Mol. Biol.">
        <title>An atomic structure of the human 26S proteasome.</title>
        <authorList>
            <person name="Huang X."/>
            <person name="Luan B."/>
            <person name="Wu J."/>
            <person name="Shi Y."/>
        </authorList>
    </citation>
    <scope>STRUCTURE BY ELECTRON MICROSCOPY (3.50 ANGSTROMS) OF 1-440</scope>
    <scope>SUBUNIT</scope>
</reference>
<reference key="18">
    <citation type="journal article" date="2016" name="Proc. Natl. Acad. Sci. U.S.A.">
        <title>Structure of the human 26S proteasome at a resolution of 3.9 Aa.</title>
        <authorList>
            <person name="Schweitzer A."/>
            <person name="Aufderheide A."/>
            <person name="Rudack T."/>
            <person name="Beck F."/>
            <person name="Pfeifer G."/>
            <person name="Plitzko J.M."/>
            <person name="Sakata E."/>
            <person name="Schulten K."/>
            <person name="Foerster F."/>
            <person name="Baumeister W."/>
        </authorList>
    </citation>
    <scope>STRUCTURE BY ELECTRON MICROSCOPY (4.02 ANGSTROMS) OF 1-440</scope>
    <scope>SUBUNIT</scope>
</reference>